<gene>
    <name type="primary">chi4</name>
</gene>
<accession>C9WJD0</accession>
<organism>
    <name type="scientific">Metarhizium anisopliae</name>
    <name type="common">Entomophthora anisopliae</name>
    <dbReference type="NCBI Taxonomy" id="5530"/>
    <lineage>
        <taxon>Eukaryota</taxon>
        <taxon>Fungi</taxon>
        <taxon>Dikarya</taxon>
        <taxon>Ascomycota</taxon>
        <taxon>Pezizomycotina</taxon>
        <taxon>Sordariomycetes</taxon>
        <taxon>Hypocreomycetidae</taxon>
        <taxon>Hypocreales</taxon>
        <taxon>Clavicipitaceae</taxon>
        <taxon>Metarhizium</taxon>
    </lineage>
</organism>
<protein>
    <recommendedName>
        <fullName>Endochitinase 4</fullName>
        <ecNumber>3.2.1.14</ecNumber>
    </recommendedName>
    <alternativeName>
        <fullName>Chitinase 4</fullName>
    </alternativeName>
</protein>
<comment type="function">
    <text evidence="1">Secreted chitinase involved in the degradation of chitin, a component of the cell walls of fungi and exoskeletal elements of some animals (including worms and arthropods). Participates in the infection process and directly acts in the penetration process of the host cuticle (By similarity).</text>
</comment>
<comment type="catalytic activity">
    <reaction>
        <text>Random endo-hydrolysis of N-acetyl-beta-D-glucosaminide (1-&gt;4)-beta-linkages in chitin and chitodextrins.</text>
        <dbReference type="EC" id="3.2.1.14"/>
    </reaction>
</comment>
<comment type="subcellular location">
    <subcellularLocation>
        <location evidence="1">Secreted</location>
    </subcellularLocation>
</comment>
<comment type="similarity">
    <text evidence="4">Belongs to the glycosyl hydrolase 18 family. Chitinase class V subfamily.</text>
</comment>
<reference key="1">
    <citation type="journal article" date="2009" name="J. Invertebr. Pathol.">
        <title>PCR-RFLP analysis of chitinase genes enables efficient genotyping of Metarhizium anisopliae var. anisopliae.</title>
        <authorList>
            <person name="Enkerli J."/>
            <person name="Ghormade V."/>
            <person name="Oulevey C."/>
            <person name="Widmer F."/>
        </authorList>
    </citation>
    <scope>NUCLEOTIDE SEQUENCE [GENOMIC DNA]</scope>
    <source>
        <strain>ARSEF 7524</strain>
    </source>
</reference>
<dbReference type="EC" id="3.2.1.14"/>
<dbReference type="EMBL" id="FJ609317">
    <property type="protein sequence ID" value="ACU30521.1"/>
    <property type="molecule type" value="Genomic_DNA"/>
</dbReference>
<dbReference type="SMR" id="C9WJD0"/>
<dbReference type="CAZy" id="GH18">
    <property type="family name" value="Glycoside Hydrolase Family 18"/>
</dbReference>
<dbReference type="GlyCosmos" id="C9WJD0">
    <property type="glycosylation" value="1 site, No reported glycans"/>
</dbReference>
<dbReference type="VEuPathDB" id="FungiDB:MAN_09429"/>
<dbReference type="GO" id="GO:0005576">
    <property type="term" value="C:extracellular region"/>
    <property type="evidence" value="ECO:0007669"/>
    <property type="project" value="UniProtKB-SubCell"/>
</dbReference>
<dbReference type="GO" id="GO:0008061">
    <property type="term" value="F:chitin binding"/>
    <property type="evidence" value="ECO:0007669"/>
    <property type="project" value="UniProtKB-KW"/>
</dbReference>
<dbReference type="GO" id="GO:0008843">
    <property type="term" value="F:endochitinase activity"/>
    <property type="evidence" value="ECO:0007669"/>
    <property type="project" value="UniProtKB-EC"/>
</dbReference>
<dbReference type="GO" id="GO:0006032">
    <property type="term" value="P:chitin catabolic process"/>
    <property type="evidence" value="ECO:0007669"/>
    <property type="project" value="UniProtKB-KW"/>
</dbReference>
<dbReference type="GO" id="GO:0000272">
    <property type="term" value="P:polysaccharide catabolic process"/>
    <property type="evidence" value="ECO:0007669"/>
    <property type="project" value="UniProtKB-KW"/>
</dbReference>
<dbReference type="CDD" id="cd02871">
    <property type="entry name" value="GH18_chitinase_D-like"/>
    <property type="match status" value="1"/>
</dbReference>
<dbReference type="Gene3D" id="3.20.20.80">
    <property type="entry name" value="Glycosidases"/>
    <property type="match status" value="1"/>
</dbReference>
<dbReference type="InterPro" id="IPR001223">
    <property type="entry name" value="Glyco_hydro18_cat"/>
</dbReference>
<dbReference type="InterPro" id="IPR001579">
    <property type="entry name" value="Glyco_hydro_18_chit_AS"/>
</dbReference>
<dbReference type="InterPro" id="IPR017853">
    <property type="entry name" value="Glycoside_hydrolase_SF"/>
</dbReference>
<dbReference type="InterPro" id="IPR050542">
    <property type="entry name" value="Glycosyl_Hydrlase18_Chitinase"/>
</dbReference>
<dbReference type="PANTHER" id="PTHR45708">
    <property type="entry name" value="ENDOCHITINASE"/>
    <property type="match status" value="1"/>
</dbReference>
<dbReference type="PANTHER" id="PTHR45708:SF49">
    <property type="entry name" value="ENDOCHITINASE"/>
    <property type="match status" value="1"/>
</dbReference>
<dbReference type="Pfam" id="PF00704">
    <property type="entry name" value="Glyco_hydro_18"/>
    <property type="match status" value="1"/>
</dbReference>
<dbReference type="SUPFAM" id="SSF51445">
    <property type="entry name" value="(Trans)glycosidases"/>
    <property type="match status" value="1"/>
</dbReference>
<dbReference type="PROSITE" id="PS01095">
    <property type="entry name" value="GH18_1"/>
    <property type="match status" value="1"/>
</dbReference>
<dbReference type="PROSITE" id="PS51910">
    <property type="entry name" value="GH18_2"/>
    <property type="match status" value="1"/>
</dbReference>
<keyword id="KW-0119">Carbohydrate metabolism</keyword>
<keyword id="KW-0146">Chitin degradation</keyword>
<keyword id="KW-0147">Chitin-binding</keyword>
<keyword id="KW-0325">Glycoprotein</keyword>
<keyword id="KW-0326">Glycosidase</keyword>
<keyword id="KW-0378">Hydrolase</keyword>
<keyword id="KW-0624">Polysaccharide degradation</keyword>
<keyword id="KW-0964">Secreted</keyword>
<keyword id="KW-0843">Virulence</keyword>
<proteinExistence type="inferred from homology"/>
<feature type="chain" id="PRO_0000429870" description="Endochitinase 4">
    <location>
        <begin position="1"/>
        <end position="282"/>
    </location>
</feature>
<feature type="domain" description="GH18" evidence="3">
    <location>
        <begin position="1" status="less than"/>
        <end position="282" status="greater than"/>
    </location>
</feature>
<feature type="active site" description="Proton donor" evidence="3">
    <location>
        <position position="112"/>
    </location>
</feature>
<feature type="glycosylation site" description="N-linked (GlcNAc...) asparagine" evidence="2">
    <location>
        <position position="265"/>
    </location>
</feature>
<feature type="non-terminal residue">
    <location>
        <position position="1"/>
    </location>
</feature>
<feature type="non-terminal residue">
    <location>
        <position position="282"/>
    </location>
</feature>
<name>CHI4_METAN</name>
<sequence length="282" mass="29690">GAKNGVHPPLGWIPIQDARIRQHGYNVISAAFPVILPDGTALWEDGMDANVKVATPAEMCQAKAAGATMVMSIGGAAAAIDLSSSSVADKFVSTIVPILKRYNFDGVDIDIEAGLSGSGTFGTLSASQANLVRIIDGILAQMPSNFGLTMAPETAYVTGGSVTYGSIWGAYLPIIKKYADNGRLWWLNMQYYNGAMYGCSGDSYEAGTVKGFVAQTDCLDKGLVIQGTTIRVPYDKQVPGLPAQSGAGGGYMSPSLVGQAWDHYNGSLKGLMTWSINWDGSK</sequence>
<evidence type="ECO:0000250" key="1"/>
<evidence type="ECO:0000255" key="2"/>
<evidence type="ECO:0000255" key="3">
    <source>
        <dbReference type="PROSITE-ProRule" id="PRU01258"/>
    </source>
</evidence>
<evidence type="ECO:0000305" key="4"/>